<comment type="function">
    <text evidence="2 3 4 5 6">Prion-like protein required for the formation of Balbiani body (electron-dense aggregates in the oocyte) and germ plasm assembly, and for the establishment of oocyte polarity during early oogenesis (PubMed:18582455, PubMed:19249209). Mobility and aggregation properties are improved by tudor domain-containing protein tdrd6 through interaction with dimethylated arginines Tri-RG domains (PubMed:30086300). Establishes oocyte polarity through interactions with RNA-binding proteins rbpms2 and dazl, initiating a positive feedback loop amplification mechanism in the Balbiani body (PubMed:24496621). Interaction of BUC protein and mRNA with rbpms2 and dazl is required to mediate Balbiani body formation (PubMed:24496621). Involved in recruitment of germ plasm to embryonic cleavage furrows and dorsoventral patterning through interaction with Kinesin-1/KIF5BA (PubMed:26253407).</text>
</comment>
<comment type="subunit">
    <text evidence="4 5 6">Specifically interacts (when methylated) with tdrd6 (via Tudor domain); interaction is responsible for recruitment of different protein complexes to germ plasm (PubMed:30086300). Interacts with rbpms2 and dazl; interaction mediates Balbiani body formation (PubMed:24496621). Interacts with kif5ba; interaction leads to buc enrichment at the embryonic cleavage furrows and mediates dorsoventral patterning (PubMed:26253407).</text>
</comment>
<comment type="subcellular location">
    <subcellularLocation>
        <location evidence="3 6">Cytoplasm</location>
    </subcellularLocation>
    <subcellularLocation>
        <location evidence="5">Cleavage furrow</location>
    </subcellularLocation>
    <text evidence="3 5 6">Localizes to nuage (a peri-nuclear protein-RNA aggregate that associates closely with mitochondria), the Balbiani body during oogenesis, and in the germ plasm upon fertilization (PubMed:19249209, PubMed:30086300). Accumulates at embryonic cleavage furrows (PubMed:26253407).</text>
</comment>
<comment type="developmental stage">
    <text evidence="3 5">Expressed exclusively in the ovary, and protein localizes to the Balbiani body during oogenesis and with the germ plasm during early embryogenesis (PubMed:19249209). Accumulates at embryonic cleavage furrows (PubMed:26253407).</text>
</comment>
<comment type="domain">
    <text evidence="6">The dimethylated RG motifs (RG[X0-4]RG[X0-4]RG) motif mediates interaction with TDRD6 and is required for Balbiani body formation.</text>
</comment>
<comment type="PTM">
    <text evidence="6">Symmetric dimethylarginine modification promotes interaction with tdrd6.</text>
</comment>
<comment type="disruption phenotype">
    <text evidence="2">Mutant fails to form Balbiani body, and vegetal mRNAs are not localized in oocytes.</text>
</comment>
<keyword id="KW-0963">Cytoplasm</keyword>
<keyword id="KW-0221">Differentiation</keyword>
<keyword id="KW-0488">Methylation</keyword>
<keyword id="KW-0896">Oogenesis</keyword>
<keyword id="KW-1185">Reference proteome</keyword>
<keyword id="KW-0744">Spermatogenesis</keyword>
<protein>
    <recommendedName>
        <fullName evidence="7">Bucky ball</fullName>
        <shortName evidence="7">buc</shortName>
    </recommendedName>
    <alternativeName>
        <fullName evidence="8">Prion-like protein Bucky ball</fullName>
    </alternativeName>
</protein>
<proteinExistence type="evidence at protein level"/>
<organism evidence="9">
    <name type="scientific">Danio rerio</name>
    <name type="common">Zebrafish</name>
    <name type="synonym">Brachydanio rerio</name>
    <dbReference type="NCBI Taxonomy" id="7955"/>
    <lineage>
        <taxon>Eukaryota</taxon>
        <taxon>Metazoa</taxon>
        <taxon>Chordata</taxon>
        <taxon>Craniata</taxon>
        <taxon>Vertebrata</taxon>
        <taxon>Euteleostomi</taxon>
        <taxon>Actinopterygii</taxon>
        <taxon>Neopterygii</taxon>
        <taxon>Teleostei</taxon>
        <taxon>Ostariophysi</taxon>
        <taxon>Cypriniformes</taxon>
        <taxon>Danionidae</taxon>
        <taxon>Danioninae</taxon>
        <taxon>Danio</taxon>
    </lineage>
</organism>
<feature type="chain" id="PRO_0000448684" description="Bucky ball">
    <location>
        <begin position="1"/>
        <end position="639"/>
    </location>
</feature>
<feature type="region of interest" description="Disordered" evidence="1">
    <location>
        <begin position="178"/>
        <end position="205"/>
    </location>
</feature>
<feature type="region of interest" description="Disordered" evidence="1">
    <location>
        <begin position="218"/>
        <end position="242"/>
    </location>
</feature>
<feature type="region of interest" description="Disordered" evidence="1">
    <location>
        <begin position="581"/>
        <end position="614"/>
    </location>
</feature>
<feature type="short sequence motif" description="RG Motif 1" evidence="6">
    <location>
        <begin position="627"/>
        <end position="628"/>
    </location>
</feature>
<feature type="short sequence motif" description="RG Motif 2" evidence="6">
    <location>
        <begin position="629"/>
        <end position="630"/>
    </location>
</feature>
<feature type="short sequence motif" description="RG Motif 3" evidence="6">
    <location>
        <begin position="635"/>
        <end position="636"/>
    </location>
</feature>
<feature type="compositionally biased region" description="Basic and acidic residues" evidence="1">
    <location>
        <begin position="178"/>
        <end position="187"/>
    </location>
</feature>
<feature type="compositionally biased region" description="Polar residues" evidence="1">
    <location>
        <begin position="189"/>
        <end position="205"/>
    </location>
</feature>
<feature type="compositionally biased region" description="Acidic residues" evidence="1">
    <location>
        <begin position="225"/>
        <end position="240"/>
    </location>
</feature>
<feature type="compositionally biased region" description="Polar residues" evidence="1">
    <location>
        <begin position="584"/>
        <end position="593"/>
    </location>
</feature>
<feature type="compositionally biased region" description="Basic residues" evidence="1">
    <location>
        <begin position="596"/>
        <end position="609"/>
    </location>
</feature>
<feature type="modified residue" description="Symmetric dimethylarginine" evidence="6">
    <location>
        <position position="627"/>
    </location>
</feature>
<feature type="modified residue" description="Symmetric dimethylarginine" evidence="6">
    <location>
        <position position="629"/>
    </location>
</feature>
<sequence length="639" mass="72011">MEGINNNSQPMGVGQPHHPVNHTRPFFYVQPPSQPYFMYQWPMNPYGHYGFPGPALHFGRPYMAPYQFMQYPGYVIPHAPMQPIDYRRINPHYPSVASYDLRVRHHFQNAGMHRETACSEVQTDPSDSVNKLIDKIESLKACELGSDKGPNNVVSSTPDVVQGEKLTRLNEDSNLEVATKECKEDPVTRPTTYSDSAYDAESSQGRLDECVFSDVLPLDSSSVHEEEEEEEKDVNEEDEPQTVADEICSQNEMSASTTSNVFCSGVQSIADPTECHDLEKLGDEQKQDIPSADAAAVIEPLISLSEDFDLPYQILRLPCNKTTTGLSLEREIDPLVYFDSPSTLLPPQNYLSSIGSAYSYSYYPQVTQERQSVLSPSIDELSSRDEMFSTDVEDLEVVPGHVYVGGGRLAEASDMPVRSRKELPSVDKTCSVCQKTCACCGSTLQDEVGMCKMAEHSHPERDEMSDQDCDYDLEAEVRSNCESPRVSKRKCCSRHALPSCGHHCAKHRHRKLLCEGQESCDLREQARVHPKGECCEEYGALAKADKRIQKGALCRPCIEQQWREGVVSDQENWASCGAKPRSWRQVTGPQDQGRTPLRRSTCKSIHQQRPRSEYNDYDETEFTYCQRGRGSMKKRGSRY</sequence>
<reference key="1">
    <citation type="journal article" date="2009" name="Curr. Biol.">
        <title>Bucky ball organizes germ plasm assembly in zebrafish.</title>
        <authorList>
            <person name="Bontems F."/>
            <person name="Stein A."/>
            <person name="Marlow F."/>
            <person name="Lyautey J."/>
            <person name="Gupta T."/>
            <person name="Mullins M.C."/>
            <person name="Dosch R."/>
        </authorList>
    </citation>
    <scope>NUCLEOTIDE SEQUENCE [MRNA]</scope>
    <scope>FUNCTION</scope>
    <scope>SUBCELLULAR LOCATION</scope>
    <scope>DEVELOPMENTAL STAGE</scope>
</reference>
<reference key="2">
    <citation type="journal article" date="2013" name="Nature">
        <title>The zebrafish reference genome sequence and its relationship to the human genome.</title>
        <authorList>
            <person name="Howe K."/>
            <person name="Clark M.D."/>
            <person name="Torroja C.F."/>
            <person name="Torrance J."/>
            <person name="Berthelot C."/>
            <person name="Muffato M."/>
            <person name="Collins J.E."/>
            <person name="Humphray S."/>
            <person name="McLaren K."/>
            <person name="Matthews L."/>
            <person name="McLaren S."/>
            <person name="Sealy I."/>
            <person name="Caccamo M."/>
            <person name="Churcher C."/>
            <person name="Scott C."/>
            <person name="Barrett J.C."/>
            <person name="Koch R."/>
            <person name="Rauch G.J."/>
            <person name="White S."/>
            <person name="Chow W."/>
            <person name="Kilian B."/>
            <person name="Quintais L.T."/>
            <person name="Guerra-Assuncao J.A."/>
            <person name="Zhou Y."/>
            <person name="Gu Y."/>
            <person name="Yen J."/>
            <person name="Vogel J.H."/>
            <person name="Eyre T."/>
            <person name="Redmond S."/>
            <person name="Banerjee R."/>
            <person name="Chi J."/>
            <person name="Fu B."/>
            <person name="Langley E."/>
            <person name="Maguire S.F."/>
            <person name="Laird G.K."/>
            <person name="Lloyd D."/>
            <person name="Kenyon E."/>
            <person name="Donaldson S."/>
            <person name="Sehra H."/>
            <person name="Almeida-King J."/>
            <person name="Loveland J."/>
            <person name="Trevanion S."/>
            <person name="Jones M."/>
            <person name="Quail M."/>
            <person name="Willey D."/>
            <person name="Hunt A."/>
            <person name="Burton J."/>
            <person name="Sims S."/>
            <person name="McLay K."/>
            <person name="Plumb B."/>
            <person name="Davis J."/>
            <person name="Clee C."/>
            <person name="Oliver K."/>
            <person name="Clark R."/>
            <person name="Riddle C."/>
            <person name="Elliot D."/>
            <person name="Threadgold G."/>
            <person name="Harden G."/>
            <person name="Ware D."/>
            <person name="Begum S."/>
            <person name="Mortimore B."/>
            <person name="Kerry G."/>
            <person name="Heath P."/>
            <person name="Phillimore B."/>
            <person name="Tracey A."/>
            <person name="Corby N."/>
            <person name="Dunn M."/>
            <person name="Johnson C."/>
            <person name="Wood J."/>
            <person name="Clark S."/>
            <person name="Pelan S."/>
            <person name="Griffiths G."/>
            <person name="Smith M."/>
            <person name="Glithero R."/>
            <person name="Howden P."/>
            <person name="Barker N."/>
            <person name="Lloyd C."/>
            <person name="Stevens C."/>
            <person name="Harley J."/>
            <person name="Holt K."/>
            <person name="Panagiotidis G."/>
            <person name="Lovell J."/>
            <person name="Beasley H."/>
            <person name="Henderson C."/>
            <person name="Gordon D."/>
            <person name="Auger K."/>
            <person name="Wright D."/>
            <person name="Collins J."/>
            <person name="Raisen C."/>
            <person name="Dyer L."/>
            <person name="Leung K."/>
            <person name="Robertson L."/>
            <person name="Ambridge K."/>
            <person name="Leongamornlert D."/>
            <person name="McGuire S."/>
            <person name="Gilderthorp R."/>
            <person name="Griffiths C."/>
            <person name="Manthravadi D."/>
            <person name="Nichol S."/>
            <person name="Barker G."/>
            <person name="Whitehead S."/>
            <person name="Kay M."/>
            <person name="Brown J."/>
            <person name="Murnane C."/>
            <person name="Gray E."/>
            <person name="Humphries M."/>
            <person name="Sycamore N."/>
            <person name="Barker D."/>
            <person name="Saunders D."/>
            <person name="Wallis J."/>
            <person name="Babbage A."/>
            <person name="Hammond S."/>
            <person name="Mashreghi-Mohammadi M."/>
            <person name="Barr L."/>
            <person name="Martin S."/>
            <person name="Wray P."/>
            <person name="Ellington A."/>
            <person name="Matthews N."/>
            <person name="Ellwood M."/>
            <person name="Woodmansey R."/>
            <person name="Clark G."/>
            <person name="Cooper J."/>
            <person name="Tromans A."/>
            <person name="Grafham D."/>
            <person name="Skuce C."/>
            <person name="Pandian R."/>
            <person name="Andrews R."/>
            <person name="Harrison E."/>
            <person name="Kimberley A."/>
            <person name="Garnett J."/>
            <person name="Fosker N."/>
            <person name="Hall R."/>
            <person name="Garner P."/>
            <person name="Kelly D."/>
            <person name="Bird C."/>
            <person name="Palmer S."/>
            <person name="Gehring I."/>
            <person name="Berger A."/>
            <person name="Dooley C.M."/>
            <person name="Ersan-Urun Z."/>
            <person name="Eser C."/>
            <person name="Geiger H."/>
            <person name="Geisler M."/>
            <person name="Karotki L."/>
            <person name="Kirn A."/>
            <person name="Konantz J."/>
            <person name="Konantz M."/>
            <person name="Oberlander M."/>
            <person name="Rudolph-Geiger S."/>
            <person name="Teucke M."/>
            <person name="Lanz C."/>
            <person name="Raddatz G."/>
            <person name="Osoegawa K."/>
            <person name="Zhu B."/>
            <person name="Rapp A."/>
            <person name="Widaa S."/>
            <person name="Langford C."/>
            <person name="Yang F."/>
            <person name="Schuster S.C."/>
            <person name="Carter N.P."/>
            <person name="Harrow J."/>
            <person name="Ning Z."/>
            <person name="Herrero J."/>
            <person name="Searle S.M."/>
            <person name="Enright A."/>
            <person name="Geisler R."/>
            <person name="Plasterk R.H."/>
            <person name="Lee C."/>
            <person name="Westerfield M."/>
            <person name="de Jong P.J."/>
            <person name="Zon L.I."/>
            <person name="Postlethwait J.H."/>
            <person name="Nusslein-Volhard C."/>
            <person name="Hubbard T.J."/>
            <person name="Roest Crollius H."/>
            <person name="Rogers J."/>
            <person name="Stemple D.L."/>
        </authorList>
    </citation>
    <scope>NUCLEOTIDE SEQUENCE [LARGE SCALE GENOMIC DNA]</scope>
    <source>
        <strain>Tuebingen</strain>
    </source>
</reference>
<reference key="3">
    <citation type="journal article" date="2008" name="Dev. Biol.">
        <title>Bucky ball functions in Balbiani body assembly and animal-vegetal polarity in the oocyte and follicle cell layer in zebrafish.</title>
        <authorList>
            <person name="Marlow F.L."/>
            <person name="Mullins M.C."/>
        </authorList>
    </citation>
    <scope>FUNCTION</scope>
    <scope>DISRUPTION PHENOTYPE</scope>
</reference>
<reference key="4">
    <citation type="journal article" date="2014" name="Development">
        <title>Oocyte polarity requires a Bucky ball-dependent feedback amplification loop.</title>
        <authorList>
            <person name="Heim A.E."/>
            <person name="Hartung O."/>
            <person name="Rothhaemel S."/>
            <person name="Ferreira E."/>
            <person name="Jenny A."/>
            <person name="Marlow F.L."/>
        </authorList>
    </citation>
    <scope>FUNCTION</scope>
    <scope>INTERACTION WITH RBPMS2 AND DAZL</scope>
</reference>
<reference key="5">
    <citation type="journal article" date="2015" name="Development">
        <title>Kinesin-1 interacts with Bucky ball to form germ cells and is required to pattern the zebrafish body axis.</title>
        <authorList>
            <person name="Campbell P.D."/>
            <person name="Heim A.E."/>
            <person name="Smith M.Z."/>
            <person name="Marlow F.L."/>
        </authorList>
    </citation>
    <scope>FUNCTION</scope>
    <scope>INTERACTION WITH KIF5BA</scope>
    <scope>SUBCELLULAR LOCATION</scope>
</reference>
<reference key="6">
    <citation type="journal article" date="2018" name="Dev. Cell">
        <title>Tdrd6a Regulates the Aggregation of Buc into Functional Subcellular Compartments that Drive Germ Cell Specification.</title>
        <authorList>
            <person name="Roovers E.F."/>
            <person name="Kaaij L.J.T."/>
            <person name="Redl S."/>
            <person name="Bronkhorst A.W."/>
            <person name="Wiebrands K."/>
            <person name="de Jesus Domingues A.M."/>
            <person name="Huang H.Y."/>
            <person name="Han C.T."/>
            <person name="Riemer S."/>
            <person name="Dosch R."/>
            <person name="Salvenmoser W."/>
            <person name="Gruen D."/>
            <person name="Butter F."/>
            <person name="van Oudenaarden A."/>
            <person name="Ketting R.F."/>
        </authorList>
    </citation>
    <scope>FUNCTION</scope>
    <scope>INTERACTION WITH TDRD6</scope>
    <scope>DOMAIN</scope>
    <scope>METHYLATION AT ARG-627 AND ARG-629</scope>
</reference>
<name>BUCKY_DANRE</name>
<gene>
    <name evidence="7 10" type="primary">buc</name>
</gene>
<evidence type="ECO:0000256" key="1">
    <source>
        <dbReference type="SAM" id="MobiDB-lite"/>
    </source>
</evidence>
<evidence type="ECO:0000269" key="2">
    <source>
    </source>
</evidence>
<evidence type="ECO:0000269" key="3">
    <source>
    </source>
</evidence>
<evidence type="ECO:0000269" key="4">
    <source>
    </source>
</evidence>
<evidence type="ECO:0000269" key="5">
    <source>
    </source>
</evidence>
<evidence type="ECO:0000269" key="6">
    <source>
    </source>
</evidence>
<evidence type="ECO:0000303" key="7">
    <source>
    </source>
</evidence>
<evidence type="ECO:0000305" key="8"/>
<evidence type="ECO:0000312" key="9">
    <source>
        <dbReference type="Proteomes" id="UP000000437"/>
    </source>
</evidence>
<evidence type="ECO:0000312" key="10">
    <source>
        <dbReference type="ZFIN" id="ZDB-GENE-070117-694"/>
    </source>
</evidence>
<accession>H0WFA5</accession>
<dbReference type="EMBL" id="CU693487">
    <property type="status" value="NOT_ANNOTATED_CDS"/>
    <property type="molecule type" value="Genomic_DNA"/>
</dbReference>
<dbReference type="EMBL" id="JQ316532">
    <property type="protein sequence ID" value="AFA26704.1"/>
    <property type="molecule type" value="mRNA"/>
</dbReference>
<dbReference type="RefSeq" id="NP_001243709.1">
    <property type="nucleotide sequence ID" value="NM_001256780.1"/>
</dbReference>
<dbReference type="FunCoup" id="H0WFA5">
    <property type="interactions" value="221"/>
</dbReference>
<dbReference type="STRING" id="7955.ENSDARP00000125536"/>
<dbReference type="PaxDb" id="7955-ENSDARP00000125536"/>
<dbReference type="Ensembl" id="ENSDART00000150330">
    <property type="protein sequence ID" value="ENSDARP00000125536"/>
    <property type="gene ID" value="ENSDARG00000096095"/>
</dbReference>
<dbReference type="Ensembl" id="ENSDART00000175159">
    <property type="protein sequence ID" value="ENSDARP00000144393"/>
    <property type="gene ID" value="ENSDARG00000096095"/>
</dbReference>
<dbReference type="GeneID" id="334375"/>
<dbReference type="KEGG" id="dre:334375"/>
<dbReference type="AGR" id="ZFIN:ZDB-GENE-070117-694"/>
<dbReference type="CTD" id="334375"/>
<dbReference type="ZFIN" id="ZDB-GENE-070117-694">
    <property type="gene designation" value="buc"/>
</dbReference>
<dbReference type="eggNOG" id="ENOG502QUT7">
    <property type="taxonomic scope" value="Eukaryota"/>
</dbReference>
<dbReference type="HOGENOM" id="CLU_428216_0_0_1"/>
<dbReference type="InParanoid" id="H0WFA5"/>
<dbReference type="OrthoDB" id="8946276at2759"/>
<dbReference type="CD-CODE" id="0E1CE0E6">
    <property type="entry name" value="Germ plasm"/>
</dbReference>
<dbReference type="CD-CODE" id="DD98A56E">
    <property type="entry name" value="Balbiani body"/>
</dbReference>
<dbReference type="PRO" id="PR:H0WFA5"/>
<dbReference type="Proteomes" id="UP000000437">
    <property type="component" value="Chromosome 2"/>
</dbReference>
<dbReference type="Bgee" id="ENSDARG00000096095">
    <property type="expression patterns" value="Expressed in cleaving embryo and 21 other cell types or tissues"/>
</dbReference>
<dbReference type="ExpressionAtlas" id="H0WFA5">
    <property type="expression patterns" value="baseline"/>
</dbReference>
<dbReference type="GO" id="GO:0032154">
    <property type="term" value="C:cleavage furrow"/>
    <property type="evidence" value="ECO:0007669"/>
    <property type="project" value="UniProtKB-SubCell"/>
</dbReference>
<dbReference type="GO" id="GO:0005737">
    <property type="term" value="C:cytoplasm"/>
    <property type="evidence" value="ECO:0007669"/>
    <property type="project" value="UniProtKB-SubCell"/>
</dbReference>
<dbReference type="GO" id="GO:0016333">
    <property type="term" value="P:morphogenesis of follicular epithelium"/>
    <property type="evidence" value="ECO:0000315"/>
    <property type="project" value="ZFIN"/>
</dbReference>
<dbReference type="GO" id="GO:0060832">
    <property type="term" value="P:oocyte animal/vegetal axis specification"/>
    <property type="evidence" value="ECO:0000315"/>
    <property type="project" value="ZFIN"/>
</dbReference>
<dbReference type="GO" id="GO:0007314">
    <property type="term" value="P:oocyte anterior/posterior axis specification"/>
    <property type="evidence" value="ECO:0000315"/>
    <property type="project" value="ZFIN"/>
</dbReference>
<dbReference type="GO" id="GO:0007315">
    <property type="term" value="P:pole plasm assembly"/>
    <property type="evidence" value="ECO:0000315"/>
    <property type="project" value="ZFIN"/>
</dbReference>
<dbReference type="GO" id="GO:0007283">
    <property type="term" value="P:spermatogenesis"/>
    <property type="evidence" value="ECO:0007669"/>
    <property type="project" value="UniProtKB-KW"/>
</dbReference>
<dbReference type="InterPro" id="IPR053309">
    <property type="entry name" value="Balbiani_Body_Formation"/>
</dbReference>
<dbReference type="PANTHER" id="PTHR38654:SF1">
    <property type="entry name" value="BUCKY BALL"/>
    <property type="match status" value="1"/>
</dbReference>
<dbReference type="PANTHER" id="PTHR38654">
    <property type="entry name" value="BUCKY BALL-RELATED"/>
    <property type="match status" value="1"/>
</dbReference>